<protein>
    <recommendedName>
        <fullName evidence="1">Deoxyribose-phosphate aldolase</fullName>
        <shortName evidence="1">DERA</shortName>
        <ecNumber evidence="1">4.1.2.4</ecNumber>
    </recommendedName>
    <alternativeName>
        <fullName evidence="1">2-deoxy-D-ribose 5-phosphate aldolase</fullName>
    </alternativeName>
    <alternativeName>
        <fullName evidence="1">Phosphodeoxyriboaldolase</fullName>
        <shortName evidence="1">Deoxyriboaldolase</shortName>
    </alternativeName>
</protein>
<organism>
    <name type="scientific">Aeromonas hydrophila subsp. hydrophila (strain ATCC 7966 / DSM 30187 / BCRC 13018 / CCUG 14551 / JCM 1027 / KCTC 2358 / NCIMB 9240 / NCTC 8049)</name>
    <dbReference type="NCBI Taxonomy" id="380703"/>
    <lineage>
        <taxon>Bacteria</taxon>
        <taxon>Pseudomonadati</taxon>
        <taxon>Pseudomonadota</taxon>
        <taxon>Gammaproteobacteria</taxon>
        <taxon>Aeromonadales</taxon>
        <taxon>Aeromonadaceae</taxon>
        <taxon>Aeromonas</taxon>
    </lineage>
</organism>
<name>DEOC_AERHH</name>
<sequence length="257" mass="27359">MTDLKLAAQRALNLMDLTTLNDDDTDQKVIDLCRKAKSPAGLTAAVCIYPRFIPIARKTLREIGAADVRIATVTNFPHGNDDIEIAVAETRAAVAYGADEVDVVFPYRAFMAGNEQVGFDLVKACKEACGSQALLKVIIETGELKEEALIRRASEISIDAGADFIKTSTGKVPVNATPEAARIMMEVIKAKNPKVGFKPAGGVKDAAVAGQYLAMAEEILGKDWVSARTFRFGASSLLASLLATLGHGDKPANTSGY</sequence>
<gene>
    <name evidence="1" type="primary">deoC</name>
    <name type="ordered locus">AHA_3690</name>
</gene>
<reference key="1">
    <citation type="journal article" date="2006" name="J. Bacteriol.">
        <title>Genome sequence of Aeromonas hydrophila ATCC 7966T: jack of all trades.</title>
        <authorList>
            <person name="Seshadri R."/>
            <person name="Joseph S.W."/>
            <person name="Chopra A.K."/>
            <person name="Sha J."/>
            <person name="Shaw J."/>
            <person name="Graf J."/>
            <person name="Haft D.H."/>
            <person name="Wu M."/>
            <person name="Ren Q."/>
            <person name="Rosovitz M.J."/>
            <person name="Madupu R."/>
            <person name="Tallon L."/>
            <person name="Kim M."/>
            <person name="Jin S."/>
            <person name="Vuong H."/>
            <person name="Stine O.C."/>
            <person name="Ali A."/>
            <person name="Horneman A.J."/>
            <person name="Heidelberg J.F."/>
        </authorList>
    </citation>
    <scope>NUCLEOTIDE SEQUENCE [LARGE SCALE GENOMIC DNA]</scope>
    <source>
        <strain>ATCC 7966 / DSM 30187 / BCRC 13018 / CCUG 14551 / JCM 1027 / KCTC 2358 / NCIMB 9240 / NCTC 8049</strain>
    </source>
</reference>
<accession>A0KPE4</accession>
<dbReference type="EC" id="4.1.2.4" evidence="1"/>
<dbReference type="EMBL" id="CP000462">
    <property type="protein sequence ID" value="ABK36815.1"/>
    <property type="molecule type" value="Genomic_DNA"/>
</dbReference>
<dbReference type="RefSeq" id="WP_011707413.1">
    <property type="nucleotide sequence ID" value="NC_008570.1"/>
</dbReference>
<dbReference type="RefSeq" id="YP_858145.1">
    <property type="nucleotide sequence ID" value="NC_008570.1"/>
</dbReference>
<dbReference type="SMR" id="A0KPE4"/>
<dbReference type="STRING" id="380703.AHA_3690"/>
<dbReference type="EnsemblBacteria" id="ABK36815">
    <property type="protein sequence ID" value="ABK36815"/>
    <property type="gene ID" value="AHA_3690"/>
</dbReference>
<dbReference type="GeneID" id="4488016"/>
<dbReference type="KEGG" id="aha:AHA_3690"/>
<dbReference type="PATRIC" id="fig|380703.7.peg.3668"/>
<dbReference type="eggNOG" id="COG0274">
    <property type="taxonomic scope" value="Bacteria"/>
</dbReference>
<dbReference type="HOGENOM" id="CLU_053595_3_1_6"/>
<dbReference type="OrthoDB" id="6579831at2"/>
<dbReference type="UniPathway" id="UPA00002">
    <property type="reaction ID" value="UER00468"/>
</dbReference>
<dbReference type="Proteomes" id="UP000000756">
    <property type="component" value="Chromosome"/>
</dbReference>
<dbReference type="GO" id="GO:0005737">
    <property type="term" value="C:cytoplasm"/>
    <property type="evidence" value="ECO:0007669"/>
    <property type="project" value="UniProtKB-SubCell"/>
</dbReference>
<dbReference type="GO" id="GO:0004139">
    <property type="term" value="F:deoxyribose-phosphate aldolase activity"/>
    <property type="evidence" value="ECO:0007669"/>
    <property type="project" value="UniProtKB-UniRule"/>
</dbReference>
<dbReference type="GO" id="GO:0006018">
    <property type="term" value="P:2-deoxyribose 1-phosphate catabolic process"/>
    <property type="evidence" value="ECO:0007669"/>
    <property type="project" value="UniProtKB-UniRule"/>
</dbReference>
<dbReference type="GO" id="GO:0016052">
    <property type="term" value="P:carbohydrate catabolic process"/>
    <property type="evidence" value="ECO:0007669"/>
    <property type="project" value="TreeGrafter"/>
</dbReference>
<dbReference type="GO" id="GO:0009264">
    <property type="term" value="P:deoxyribonucleotide catabolic process"/>
    <property type="evidence" value="ECO:0007669"/>
    <property type="project" value="InterPro"/>
</dbReference>
<dbReference type="CDD" id="cd00959">
    <property type="entry name" value="DeoC"/>
    <property type="match status" value="1"/>
</dbReference>
<dbReference type="FunFam" id="3.20.20.70:FF:000034">
    <property type="entry name" value="Deoxyribose-phosphate aldolase"/>
    <property type="match status" value="1"/>
</dbReference>
<dbReference type="Gene3D" id="3.20.20.70">
    <property type="entry name" value="Aldolase class I"/>
    <property type="match status" value="1"/>
</dbReference>
<dbReference type="HAMAP" id="MF_00592">
    <property type="entry name" value="DeoC_type2"/>
    <property type="match status" value="1"/>
</dbReference>
<dbReference type="InterPro" id="IPR013785">
    <property type="entry name" value="Aldolase_TIM"/>
</dbReference>
<dbReference type="InterPro" id="IPR011343">
    <property type="entry name" value="DeoC"/>
</dbReference>
<dbReference type="InterPro" id="IPR002915">
    <property type="entry name" value="DeoC/FbaB/LacD_aldolase"/>
</dbReference>
<dbReference type="InterPro" id="IPR023649">
    <property type="entry name" value="DeoC_typeII"/>
</dbReference>
<dbReference type="NCBIfam" id="TIGR00126">
    <property type="entry name" value="deoC"/>
    <property type="match status" value="1"/>
</dbReference>
<dbReference type="PANTHER" id="PTHR10889">
    <property type="entry name" value="DEOXYRIBOSE-PHOSPHATE ALDOLASE"/>
    <property type="match status" value="1"/>
</dbReference>
<dbReference type="PANTHER" id="PTHR10889:SF3">
    <property type="entry name" value="DEOXYRIBOSE-PHOSPHATE ALDOLASE"/>
    <property type="match status" value="1"/>
</dbReference>
<dbReference type="Pfam" id="PF01791">
    <property type="entry name" value="DeoC"/>
    <property type="match status" value="1"/>
</dbReference>
<dbReference type="PIRSF" id="PIRSF001357">
    <property type="entry name" value="DeoC"/>
    <property type="match status" value="1"/>
</dbReference>
<dbReference type="SMART" id="SM01133">
    <property type="entry name" value="DeoC"/>
    <property type="match status" value="1"/>
</dbReference>
<dbReference type="SUPFAM" id="SSF51569">
    <property type="entry name" value="Aldolase"/>
    <property type="match status" value="1"/>
</dbReference>
<comment type="function">
    <text evidence="1">Catalyzes a reversible aldol reaction between acetaldehyde and D-glyceraldehyde 3-phosphate to generate 2-deoxy-D-ribose 5-phosphate.</text>
</comment>
<comment type="catalytic activity">
    <reaction evidence="1">
        <text>2-deoxy-D-ribose 5-phosphate = D-glyceraldehyde 3-phosphate + acetaldehyde</text>
        <dbReference type="Rhea" id="RHEA:12821"/>
        <dbReference type="ChEBI" id="CHEBI:15343"/>
        <dbReference type="ChEBI" id="CHEBI:59776"/>
        <dbReference type="ChEBI" id="CHEBI:62877"/>
        <dbReference type="EC" id="4.1.2.4"/>
    </reaction>
</comment>
<comment type="pathway">
    <text evidence="1">Carbohydrate degradation; 2-deoxy-D-ribose 1-phosphate degradation; D-glyceraldehyde 3-phosphate and acetaldehyde from 2-deoxy-alpha-D-ribose 1-phosphate: step 2/2.</text>
</comment>
<comment type="subcellular location">
    <subcellularLocation>
        <location evidence="1">Cytoplasm</location>
    </subcellularLocation>
</comment>
<comment type="similarity">
    <text evidence="1">Belongs to the DeoC/FbaB aldolase family. DeoC type 2 subfamily.</text>
</comment>
<proteinExistence type="inferred from homology"/>
<keyword id="KW-0963">Cytoplasm</keyword>
<keyword id="KW-0456">Lyase</keyword>
<keyword id="KW-1185">Reference proteome</keyword>
<keyword id="KW-0704">Schiff base</keyword>
<evidence type="ECO:0000255" key="1">
    <source>
        <dbReference type="HAMAP-Rule" id="MF_00592"/>
    </source>
</evidence>
<feature type="chain" id="PRO_1000072592" description="Deoxyribose-phosphate aldolase">
    <location>
        <begin position="1"/>
        <end position="257"/>
    </location>
</feature>
<feature type="active site" description="Proton donor/acceptor" evidence="1">
    <location>
        <position position="102"/>
    </location>
</feature>
<feature type="active site" description="Schiff-base intermediate with acetaldehyde" evidence="1">
    <location>
        <position position="166"/>
    </location>
</feature>
<feature type="active site" description="Proton donor/acceptor" evidence="1">
    <location>
        <position position="198"/>
    </location>
</feature>